<name>URED_LEPCP</name>
<reference key="1">
    <citation type="submission" date="2008-03" db="EMBL/GenBank/DDBJ databases">
        <title>Complete sequence of Leptothrix cholodnii SP-6.</title>
        <authorList>
            <consortium name="US DOE Joint Genome Institute"/>
            <person name="Copeland A."/>
            <person name="Lucas S."/>
            <person name="Lapidus A."/>
            <person name="Glavina del Rio T."/>
            <person name="Dalin E."/>
            <person name="Tice H."/>
            <person name="Bruce D."/>
            <person name="Goodwin L."/>
            <person name="Pitluck S."/>
            <person name="Chertkov O."/>
            <person name="Brettin T."/>
            <person name="Detter J.C."/>
            <person name="Han C."/>
            <person name="Kuske C.R."/>
            <person name="Schmutz J."/>
            <person name="Larimer F."/>
            <person name="Land M."/>
            <person name="Hauser L."/>
            <person name="Kyrpides N."/>
            <person name="Lykidis A."/>
            <person name="Emerson D."/>
            <person name="Richardson P."/>
        </authorList>
    </citation>
    <scope>NUCLEOTIDE SEQUENCE [LARGE SCALE GENOMIC DNA]</scope>
    <source>
        <strain>ATCC 51168 / LMG 8142 / SP-6</strain>
    </source>
</reference>
<proteinExistence type="inferred from homology"/>
<accession>B1Y3W7</accession>
<evidence type="ECO:0000255" key="1">
    <source>
        <dbReference type="HAMAP-Rule" id="MF_01384"/>
    </source>
</evidence>
<protein>
    <recommendedName>
        <fullName evidence="1">Urease accessory protein UreD</fullName>
    </recommendedName>
</protein>
<sequence>MSWHGHLQLHYRHDPNEDRTVAHDRHHGPLRVLQRLYPEGPSICHHVLVHPPGGIVGGDTLEVDLDLAPGSHALITTPGATRYYRSAGEVARQQVRARLAEGSRLEWLPLETIAYDACIAENSLRFEIAPGAMMMGWDLLALGLPAAGKPWQRGSYLQQLELPGIWLERARIDAADARLLDSPLGWAGQRVLGTFWLAGGDALPKGLSDALIESARALIGDSALAATAGVSAPHANTVVLRVLAPRVEPAMHLLGAIRAAWRSIAWHLDPCVPRIWRT</sequence>
<dbReference type="EMBL" id="CP001013">
    <property type="protein sequence ID" value="ACB33361.1"/>
    <property type="molecule type" value="Genomic_DNA"/>
</dbReference>
<dbReference type="RefSeq" id="WP_012346123.1">
    <property type="nucleotide sequence ID" value="NC_010524.1"/>
</dbReference>
<dbReference type="SMR" id="B1Y3W7"/>
<dbReference type="STRING" id="395495.Lcho_1092"/>
<dbReference type="KEGG" id="lch:Lcho_1092"/>
<dbReference type="eggNOG" id="COG0829">
    <property type="taxonomic scope" value="Bacteria"/>
</dbReference>
<dbReference type="HOGENOM" id="CLU_056339_0_0_4"/>
<dbReference type="OrthoDB" id="9798842at2"/>
<dbReference type="Proteomes" id="UP000001693">
    <property type="component" value="Chromosome"/>
</dbReference>
<dbReference type="GO" id="GO:0005737">
    <property type="term" value="C:cytoplasm"/>
    <property type="evidence" value="ECO:0007669"/>
    <property type="project" value="UniProtKB-SubCell"/>
</dbReference>
<dbReference type="GO" id="GO:0016151">
    <property type="term" value="F:nickel cation binding"/>
    <property type="evidence" value="ECO:0007669"/>
    <property type="project" value="UniProtKB-UniRule"/>
</dbReference>
<dbReference type="HAMAP" id="MF_01384">
    <property type="entry name" value="UreD"/>
    <property type="match status" value="1"/>
</dbReference>
<dbReference type="InterPro" id="IPR002669">
    <property type="entry name" value="UreD"/>
</dbReference>
<dbReference type="PANTHER" id="PTHR33643">
    <property type="entry name" value="UREASE ACCESSORY PROTEIN D"/>
    <property type="match status" value="1"/>
</dbReference>
<dbReference type="PANTHER" id="PTHR33643:SF1">
    <property type="entry name" value="UREASE ACCESSORY PROTEIN D"/>
    <property type="match status" value="1"/>
</dbReference>
<dbReference type="Pfam" id="PF01774">
    <property type="entry name" value="UreD"/>
    <property type="match status" value="1"/>
</dbReference>
<gene>
    <name evidence="1" type="primary">ureD</name>
    <name type="ordered locus">Lcho_1092</name>
</gene>
<comment type="function">
    <text evidence="1">Required for maturation of urease via the functional incorporation of the urease nickel metallocenter.</text>
</comment>
<comment type="subunit">
    <text evidence="1">UreD, UreF and UreG form a complex that acts as a GTP-hydrolysis-dependent molecular chaperone, activating the urease apoprotein by helping to assemble the nickel containing metallocenter of UreC. The UreE protein probably delivers the nickel.</text>
</comment>
<comment type="subcellular location">
    <subcellularLocation>
        <location evidence="1">Cytoplasm</location>
    </subcellularLocation>
</comment>
<comment type="similarity">
    <text evidence="1">Belongs to the UreD family.</text>
</comment>
<feature type="chain" id="PRO_0000346570" description="Urease accessory protein UreD">
    <location>
        <begin position="1"/>
        <end position="278"/>
    </location>
</feature>
<organism>
    <name type="scientific">Leptothrix cholodnii (strain ATCC 51168 / LMG 8142 / SP-6)</name>
    <name type="common">Leptothrix discophora (strain SP-6)</name>
    <dbReference type="NCBI Taxonomy" id="395495"/>
    <lineage>
        <taxon>Bacteria</taxon>
        <taxon>Pseudomonadati</taxon>
        <taxon>Pseudomonadota</taxon>
        <taxon>Betaproteobacteria</taxon>
        <taxon>Burkholderiales</taxon>
        <taxon>Sphaerotilaceae</taxon>
        <taxon>Leptothrix</taxon>
    </lineage>
</organism>
<keyword id="KW-0143">Chaperone</keyword>
<keyword id="KW-0963">Cytoplasm</keyword>
<keyword id="KW-0996">Nickel insertion</keyword>
<keyword id="KW-1185">Reference proteome</keyword>